<protein>
    <recommendedName>
        <fullName>Protein phosphatase methylesterase 1</fullName>
        <shortName>PME-1</shortName>
        <ecNumber>3.1.1.89</ecNumber>
    </recommendedName>
</protein>
<keyword id="KW-0378">Hydrolase</keyword>
<keyword id="KW-1185">Reference proteome</keyword>
<keyword id="KW-0719">Serine esterase</keyword>
<gene>
    <name type="primary">PPE1</name>
    <name type="ordered locus">KLLA0D13046g</name>
</gene>
<evidence type="ECO:0000250" key="1"/>
<evidence type="ECO:0000305" key="2"/>
<accession>Q6CQZ5</accession>
<reference key="1">
    <citation type="journal article" date="2004" name="Nature">
        <title>Genome evolution in yeasts.</title>
        <authorList>
            <person name="Dujon B."/>
            <person name="Sherman D."/>
            <person name="Fischer G."/>
            <person name="Durrens P."/>
            <person name="Casaregola S."/>
            <person name="Lafontaine I."/>
            <person name="de Montigny J."/>
            <person name="Marck C."/>
            <person name="Neuveglise C."/>
            <person name="Talla E."/>
            <person name="Goffard N."/>
            <person name="Frangeul L."/>
            <person name="Aigle M."/>
            <person name="Anthouard V."/>
            <person name="Babour A."/>
            <person name="Barbe V."/>
            <person name="Barnay S."/>
            <person name="Blanchin S."/>
            <person name="Beckerich J.-M."/>
            <person name="Beyne E."/>
            <person name="Bleykasten C."/>
            <person name="Boisrame A."/>
            <person name="Boyer J."/>
            <person name="Cattolico L."/>
            <person name="Confanioleri F."/>
            <person name="de Daruvar A."/>
            <person name="Despons L."/>
            <person name="Fabre E."/>
            <person name="Fairhead C."/>
            <person name="Ferry-Dumazet H."/>
            <person name="Groppi A."/>
            <person name="Hantraye F."/>
            <person name="Hennequin C."/>
            <person name="Jauniaux N."/>
            <person name="Joyet P."/>
            <person name="Kachouri R."/>
            <person name="Kerrest A."/>
            <person name="Koszul R."/>
            <person name="Lemaire M."/>
            <person name="Lesur I."/>
            <person name="Ma L."/>
            <person name="Muller H."/>
            <person name="Nicaud J.-M."/>
            <person name="Nikolski M."/>
            <person name="Oztas S."/>
            <person name="Ozier-Kalogeropoulos O."/>
            <person name="Pellenz S."/>
            <person name="Potier S."/>
            <person name="Richard G.-F."/>
            <person name="Straub M.-L."/>
            <person name="Suleau A."/>
            <person name="Swennen D."/>
            <person name="Tekaia F."/>
            <person name="Wesolowski-Louvel M."/>
            <person name="Westhof E."/>
            <person name="Wirth B."/>
            <person name="Zeniou-Meyer M."/>
            <person name="Zivanovic Y."/>
            <person name="Bolotin-Fukuhara M."/>
            <person name="Thierry A."/>
            <person name="Bouchier C."/>
            <person name="Caudron B."/>
            <person name="Scarpelli C."/>
            <person name="Gaillardin C."/>
            <person name="Weissenbach J."/>
            <person name="Wincker P."/>
            <person name="Souciet J.-L."/>
        </authorList>
    </citation>
    <scope>NUCLEOTIDE SEQUENCE [LARGE SCALE GENOMIC DNA]</scope>
    <source>
        <strain>ATCC 8585 / CBS 2359 / DSM 70799 / NBRC 1267 / NRRL Y-1140 / WM37</strain>
    </source>
</reference>
<comment type="function">
    <text evidence="1">Demethylates proteins that have been reversibly carboxymethylated. Demethylates the phosphatase PP2A catalytic subunit (By similarity).</text>
</comment>
<comment type="catalytic activity">
    <reaction>
        <text>[phosphatase 2A protein]-C-terminal L-leucine methyl ester + H2O = [phosphatase 2A protein]-C-terminal L-leucine + methanol + H(+)</text>
        <dbReference type="Rhea" id="RHEA:48548"/>
        <dbReference type="Rhea" id="RHEA-COMP:12134"/>
        <dbReference type="Rhea" id="RHEA-COMP:12135"/>
        <dbReference type="ChEBI" id="CHEBI:15377"/>
        <dbReference type="ChEBI" id="CHEBI:15378"/>
        <dbReference type="ChEBI" id="CHEBI:17790"/>
        <dbReference type="ChEBI" id="CHEBI:90516"/>
        <dbReference type="ChEBI" id="CHEBI:90517"/>
        <dbReference type="EC" id="3.1.1.89"/>
    </reaction>
</comment>
<comment type="similarity">
    <text evidence="2">Belongs to the AB hydrolase superfamily.</text>
</comment>
<feature type="chain" id="PRO_0000223667" description="Protein phosphatase methylesterase 1">
    <location>
        <begin position="1"/>
        <end position="395"/>
    </location>
</feature>
<feature type="active site" evidence="1">
    <location>
        <position position="194"/>
    </location>
</feature>
<feature type="active site" evidence="1">
    <location>
        <position position="222"/>
    </location>
</feature>
<feature type="active site" evidence="1">
    <location>
        <position position="348"/>
    </location>
</feature>
<name>PPME1_KLULA</name>
<dbReference type="EC" id="3.1.1.89"/>
<dbReference type="EMBL" id="CR382124">
    <property type="protein sequence ID" value="CAH00740.1"/>
    <property type="molecule type" value="Genomic_DNA"/>
</dbReference>
<dbReference type="RefSeq" id="XP_453644.1">
    <property type="nucleotide sequence ID" value="XM_453644.1"/>
</dbReference>
<dbReference type="SMR" id="Q6CQZ5"/>
<dbReference type="FunCoup" id="Q6CQZ5">
    <property type="interactions" value="873"/>
</dbReference>
<dbReference type="STRING" id="284590.Q6CQZ5"/>
<dbReference type="ESTHER" id="klula-ppme1">
    <property type="family name" value="PPase_methylesterase_euk"/>
</dbReference>
<dbReference type="PaxDb" id="284590-Q6CQZ5"/>
<dbReference type="KEGG" id="kla:KLLA0_D13046g"/>
<dbReference type="eggNOG" id="KOG2564">
    <property type="taxonomic scope" value="Eukaryota"/>
</dbReference>
<dbReference type="HOGENOM" id="CLU_024818_3_0_1"/>
<dbReference type="InParanoid" id="Q6CQZ5"/>
<dbReference type="OMA" id="VMVCHHG"/>
<dbReference type="Proteomes" id="UP000000598">
    <property type="component" value="Chromosome D"/>
</dbReference>
<dbReference type="GO" id="GO:0051722">
    <property type="term" value="F:protein C-terminal methylesterase activity"/>
    <property type="evidence" value="ECO:0007669"/>
    <property type="project" value="UniProtKB-EC"/>
</dbReference>
<dbReference type="Gene3D" id="3.40.50.1820">
    <property type="entry name" value="alpha/beta hydrolase"/>
    <property type="match status" value="1"/>
</dbReference>
<dbReference type="InterPro" id="IPR000073">
    <property type="entry name" value="AB_hydrolase_1"/>
</dbReference>
<dbReference type="InterPro" id="IPR029058">
    <property type="entry name" value="AB_hydrolase_fold"/>
</dbReference>
<dbReference type="InterPro" id="IPR016812">
    <property type="entry name" value="PPase_methylesterase_euk"/>
</dbReference>
<dbReference type="PANTHER" id="PTHR14189:SF0">
    <property type="entry name" value="PROTEIN PHOSPHATASE METHYLESTERASE 1"/>
    <property type="match status" value="1"/>
</dbReference>
<dbReference type="PANTHER" id="PTHR14189">
    <property type="entry name" value="PROTEIN PHOSPHATASE METHYLESTERASE-1 RELATED"/>
    <property type="match status" value="1"/>
</dbReference>
<dbReference type="Pfam" id="PF00561">
    <property type="entry name" value="Abhydrolase_1"/>
    <property type="match status" value="1"/>
</dbReference>
<dbReference type="PIRSF" id="PIRSF022950">
    <property type="entry name" value="PPase_methylesterase_euk"/>
    <property type="match status" value="1"/>
</dbReference>
<dbReference type="SUPFAM" id="SSF53474">
    <property type="entry name" value="alpha/beta-Hydrolases"/>
    <property type="match status" value="1"/>
</dbReference>
<proteinExistence type="inferred from homology"/>
<organism>
    <name type="scientific">Kluyveromyces lactis (strain ATCC 8585 / CBS 2359 / DSM 70799 / NBRC 1267 / NRRL Y-1140 / WM37)</name>
    <name type="common">Yeast</name>
    <name type="synonym">Candida sphaerica</name>
    <dbReference type="NCBI Taxonomy" id="284590"/>
    <lineage>
        <taxon>Eukaryota</taxon>
        <taxon>Fungi</taxon>
        <taxon>Dikarya</taxon>
        <taxon>Ascomycota</taxon>
        <taxon>Saccharomycotina</taxon>
        <taxon>Saccharomycetes</taxon>
        <taxon>Saccharomycetales</taxon>
        <taxon>Saccharomycetaceae</taxon>
        <taxon>Kluyveromyces</taxon>
    </lineage>
</organism>
<sequence length="395" mass="44181">MSGNLQREALLKEFENAGKMIHAFDTAPEGNGEEDTITELPVVKNPGLGVSSETKAENMEDTGFPRWTEFFAKNETVSLPNRNFTFNTYFQVPEVNSSDLSSIPIFLAHHGAGSTGLTFAPLAKTLKEDLGTNFGFFSFDARGHGETKPLDPTDVTYYLNDFVTDFVELIVWFYENYLKACKQSKLSLILVGHSLGGSVCANLYEHLPEYIKRHTTGLAMLDIVEEMAKFVLTKVDHFLSVTPNVFGSAKEAVDWYQSHNYSKLKESAEISVPALFHKAKSGKVVRITNLASFKPYWDSWFDGLSAKFVSLPTSKLLILAGNDNLDKELIVGQMQGKYQLIVFQDSGHFIQEDVPKKAAISLVDFWKRSDNRNVTIKTNWGSSQNKTLEGKKTVE</sequence>